<proteinExistence type="inferred from homology"/>
<feature type="chain" id="PRO_0000251347" description="Large ribosomal subunit protein uL18">
    <location>
        <begin position="1"/>
        <end position="116"/>
    </location>
</feature>
<dbReference type="EMBL" id="CP000058">
    <property type="protein sequence ID" value="AAZ35442.1"/>
    <property type="molecule type" value="Genomic_DNA"/>
</dbReference>
<dbReference type="RefSeq" id="WP_002555473.1">
    <property type="nucleotide sequence ID" value="NC_005773.3"/>
</dbReference>
<dbReference type="SMR" id="Q48D52"/>
<dbReference type="GeneID" id="96221014"/>
<dbReference type="KEGG" id="psp:PSPPH_4576"/>
<dbReference type="eggNOG" id="COG0256">
    <property type="taxonomic scope" value="Bacteria"/>
</dbReference>
<dbReference type="HOGENOM" id="CLU_098841_0_1_6"/>
<dbReference type="Proteomes" id="UP000000551">
    <property type="component" value="Chromosome"/>
</dbReference>
<dbReference type="GO" id="GO:0022625">
    <property type="term" value="C:cytosolic large ribosomal subunit"/>
    <property type="evidence" value="ECO:0007669"/>
    <property type="project" value="TreeGrafter"/>
</dbReference>
<dbReference type="GO" id="GO:0008097">
    <property type="term" value="F:5S rRNA binding"/>
    <property type="evidence" value="ECO:0007669"/>
    <property type="project" value="TreeGrafter"/>
</dbReference>
<dbReference type="GO" id="GO:0003735">
    <property type="term" value="F:structural constituent of ribosome"/>
    <property type="evidence" value="ECO:0007669"/>
    <property type="project" value="InterPro"/>
</dbReference>
<dbReference type="GO" id="GO:0006412">
    <property type="term" value="P:translation"/>
    <property type="evidence" value="ECO:0007669"/>
    <property type="project" value="UniProtKB-UniRule"/>
</dbReference>
<dbReference type="CDD" id="cd00432">
    <property type="entry name" value="Ribosomal_L18_L5e"/>
    <property type="match status" value="1"/>
</dbReference>
<dbReference type="FunFam" id="3.30.420.100:FF:000001">
    <property type="entry name" value="50S ribosomal protein L18"/>
    <property type="match status" value="1"/>
</dbReference>
<dbReference type="Gene3D" id="3.30.420.100">
    <property type="match status" value="1"/>
</dbReference>
<dbReference type="HAMAP" id="MF_01337_B">
    <property type="entry name" value="Ribosomal_uL18_B"/>
    <property type="match status" value="1"/>
</dbReference>
<dbReference type="InterPro" id="IPR004389">
    <property type="entry name" value="Ribosomal_uL18_bac-type"/>
</dbReference>
<dbReference type="InterPro" id="IPR005484">
    <property type="entry name" value="Ribosomal_uL18_bac/euk"/>
</dbReference>
<dbReference type="NCBIfam" id="TIGR00060">
    <property type="entry name" value="L18_bact"/>
    <property type="match status" value="1"/>
</dbReference>
<dbReference type="PANTHER" id="PTHR12899">
    <property type="entry name" value="39S RIBOSOMAL PROTEIN L18, MITOCHONDRIAL"/>
    <property type="match status" value="1"/>
</dbReference>
<dbReference type="PANTHER" id="PTHR12899:SF3">
    <property type="entry name" value="LARGE RIBOSOMAL SUBUNIT PROTEIN UL18M"/>
    <property type="match status" value="1"/>
</dbReference>
<dbReference type="Pfam" id="PF00861">
    <property type="entry name" value="Ribosomal_L18p"/>
    <property type="match status" value="1"/>
</dbReference>
<dbReference type="SUPFAM" id="SSF53137">
    <property type="entry name" value="Translational machinery components"/>
    <property type="match status" value="1"/>
</dbReference>
<organism>
    <name type="scientific">Pseudomonas savastanoi pv. phaseolicola (strain 1448A / Race 6)</name>
    <name type="common">Pseudomonas syringae pv. phaseolicola (strain 1448A / Race 6)</name>
    <dbReference type="NCBI Taxonomy" id="264730"/>
    <lineage>
        <taxon>Bacteria</taxon>
        <taxon>Pseudomonadati</taxon>
        <taxon>Pseudomonadota</taxon>
        <taxon>Gammaproteobacteria</taxon>
        <taxon>Pseudomonadales</taxon>
        <taxon>Pseudomonadaceae</taxon>
        <taxon>Pseudomonas</taxon>
    </lineage>
</organism>
<protein>
    <recommendedName>
        <fullName evidence="1">Large ribosomal subunit protein uL18</fullName>
    </recommendedName>
    <alternativeName>
        <fullName evidence="2">50S ribosomal protein L18</fullName>
    </alternativeName>
</protein>
<gene>
    <name evidence="1" type="primary">rplR</name>
    <name type="ordered locus">PSPPH_4576</name>
</gene>
<comment type="function">
    <text evidence="1">This is one of the proteins that bind and probably mediate the attachment of the 5S RNA into the large ribosomal subunit, where it forms part of the central protuberance.</text>
</comment>
<comment type="subunit">
    <text evidence="1">Part of the 50S ribosomal subunit; part of the 5S rRNA/L5/L18/L25 subcomplex. Contacts the 5S and 23S rRNAs.</text>
</comment>
<comment type="similarity">
    <text evidence="1">Belongs to the universal ribosomal protein uL18 family.</text>
</comment>
<evidence type="ECO:0000255" key="1">
    <source>
        <dbReference type="HAMAP-Rule" id="MF_01337"/>
    </source>
</evidence>
<evidence type="ECO:0000305" key="2"/>
<accession>Q48D52</accession>
<reference key="1">
    <citation type="journal article" date="2005" name="J. Bacteriol.">
        <title>Whole-genome sequence analysis of Pseudomonas syringae pv. phaseolicola 1448A reveals divergence among pathovars in genes involved in virulence and transposition.</title>
        <authorList>
            <person name="Joardar V."/>
            <person name="Lindeberg M."/>
            <person name="Jackson R.W."/>
            <person name="Selengut J."/>
            <person name="Dodson R."/>
            <person name="Brinkac L.M."/>
            <person name="Daugherty S.C."/>
            <person name="DeBoy R.T."/>
            <person name="Durkin A.S."/>
            <person name="Gwinn Giglio M."/>
            <person name="Madupu R."/>
            <person name="Nelson W.C."/>
            <person name="Rosovitz M.J."/>
            <person name="Sullivan S.A."/>
            <person name="Crabtree J."/>
            <person name="Creasy T."/>
            <person name="Davidsen T.M."/>
            <person name="Haft D.H."/>
            <person name="Zafar N."/>
            <person name="Zhou L."/>
            <person name="Halpin R."/>
            <person name="Holley T."/>
            <person name="Khouri H.M."/>
            <person name="Feldblyum T.V."/>
            <person name="White O."/>
            <person name="Fraser C.M."/>
            <person name="Chatterjee A.K."/>
            <person name="Cartinhour S."/>
            <person name="Schneider D."/>
            <person name="Mansfield J.W."/>
            <person name="Collmer A."/>
            <person name="Buell R."/>
        </authorList>
    </citation>
    <scope>NUCLEOTIDE SEQUENCE [LARGE SCALE GENOMIC DNA]</scope>
    <source>
        <strain>1448A / Race 6</strain>
    </source>
</reference>
<sequence>MTVKKVTRLRRARKARLKMHELEVVRLCVHRSSQHIYAQVISADGSKVLASASTLDKELRDGATGNIDAATKVGKLVAERAKAAGVSQVAFDRSGFKYHGRVKALADAAREGGLEF</sequence>
<name>RL18_PSE14</name>
<keyword id="KW-0687">Ribonucleoprotein</keyword>
<keyword id="KW-0689">Ribosomal protein</keyword>
<keyword id="KW-0694">RNA-binding</keyword>
<keyword id="KW-0699">rRNA-binding</keyword>